<dbReference type="EMBL" id="X84225">
    <property type="protein sequence ID" value="CAA59007.1"/>
    <property type="molecule type" value="mRNA"/>
</dbReference>
<dbReference type="RefSeq" id="NP_001312190.1">
    <property type="nucleotide sequence ID" value="NM_001325261.1"/>
</dbReference>
<dbReference type="SMR" id="Q9SMB4"/>
<dbReference type="STRING" id="4097.Q9SMB4"/>
<dbReference type="PaxDb" id="4097-Q9SMB4"/>
<dbReference type="GeneID" id="107778533"/>
<dbReference type="KEGG" id="nta:107778533"/>
<dbReference type="OrthoDB" id="48883at2759"/>
<dbReference type="Proteomes" id="UP000084051">
    <property type="component" value="Unplaced"/>
</dbReference>
<dbReference type="GO" id="GO:0009535">
    <property type="term" value="C:chloroplast thylakoid membrane"/>
    <property type="evidence" value="ECO:0000318"/>
    <property type="project" value="GO_Central"/>
</dbReference>
<dbReference type="GO" id="GO:0009523">
    <property type="term" value="C:photosystem II"/>
    <property type="evidence" value="ECO:0007669"/>
    <property type="project" value="UniProtKB-KW"/>
</dbReference>
<dbReference type="GO" id="GO:0015979">
    <property type="term" value="P:photosynthesis"/>
    <property type="evidence" value="ECO:0007669"/>
    <property type="project" value="UniProtKB-KW"/>
</dbReference>
<dbReference type="FunFam" id="1.10.3460.10:FF:000008">
    <property type="entry name" value="Photosystem II 22 kDa protein, chloroplastic"/>
    <property type="match status" value="2"/>
</dbReference>
<dbReference type="Gene3D" id="1.10.3460.10">
    <property type="entry name" value="Chlorophyll a/b binding protein domain"/>
    <property type="match status" value="2"/>
</dbReference>
<dbReference type="InterPro" id="IPR022796">
    <property type="entry name" value="Chloroa_b-bind"/>
</dbReference>
<dbReference type="PANTHER" id="PTHR14154">
    <property type="entry name" value="UPF0041 BRAIN PROTEIN 44-RELATED"/>
    <property type="match status" value="1"/>
</dbReference>
<dbReference type="Pfam" id="PF00504">
    <property type="entry name" value="Chloroa_b-bind"/>
    <property type="match status" value="1"/>
</dbReference>
<dbReference type="SUPFAM" id="SSF103511">
    <property type="entry name" value="Chlorophyll a-b binding protein"/>
    <property type="match status" value="1"/>
</dbReference>
<organism>
    <name type="scientific">Nicotiana tabacum</name>
    <name type="common">Common tobacco</name>
    <dbReference type="NCBI Taxonomy" id="4097"/>
    <lineage>
        <taxon>Eukaryota</taxon>
        <taxon>Viridiplantae</taxon>
        <taxon>Streptophyta</taxon>
        <taxon>Embryophyta</taxon>
        <taxon>Tracheophyta</taxon>
        <taxon>Spermatophyta</taxon>
        <taxon>Magnoliopsida</taxon>
        <taxon>eudicotyledons</taxon>
        <taxon>Gunneridae</taxon>
        <taxon>Pentapetalae</taxon>
        <taxon>asterids</taxon>
        <taxon>lamiids</taxon>
        <taxon>Solanales</taxon>
        <taxon>Solanaceae</taxon>
        <taxon>Nicotianoideae</taxon>
        <taxon>Nicotianeae</taxon>
        <taxon>Nicotiana</taxon>
    </lineage>
</organism>
<proteinExistence type="evidence at transcript level"/>
<name>PSBS_TOBAC</name>
<sequence length="274" mass="29087">MAQTMLLTANAKVDLRSKESLVERLKPKPLSSFFLPSLPLKYPSASASASSHFTSTTVALFKSKAKAPAKKVVPKPKEKVEDGIFGTSGGIGFTKQNELFVGRVAMIGFAASLLGEAITGKGILAQLNLETGIPIYEAEPLLLFFILFNLLGAIGALEDRGKFIDDPAPPTGLDKAVIPPGKGFKSALGLSEGGPLFEFTKANELFVGRLAQLGIAFSIIGEIITGKGALAQLNFETGVPINEIEPLLLFNIVFFFVAAINPGTGKFVTDEEEE</sequence>
<gene>
    <name type="primary">PSBS</name>
</gene>
<protein>
    <recommendedName>
        <fullName>Photosystem II 22 kDa protein, chloroplastic</fullName>
    </recommendedName>
    <alternativeName>
        <fullName>CP22</fullName>
    </alternativeName>
</protein>
<accession>Q9SMB4</accession>
<feature type="transit peptide" description="Chloroplast" evidence="2">
    <location>
        <begin position="1"/>
        <end position="66"/>
    </location>
</feature>
<feature type="chain" id="PRO_0000007809" description="Photosystem II 22 kDa protein, chloroplastic">
    <location>
        <begin position="67"/>
        <end position="274"/>
    </location>
</feature>
<feature type="transmembrane region" description="Helical" evidence="2">
    <location>
        <begin position="104"/>
        <end position="124"/>
    </location>
</feature>
<feature type="transmembrane region" description="Helical" evidence="2">
    <location>
        <begin position="138"/>
        <end position="158"/>
    </location>
</feature>
<feature type="transmembrane region" description="Helical" evidence="2">
    <location>
        <begin position="205"/>
        <end position="225"/>
    </location>
</feature>
<feature type="transmembrane region" description="Helical" evidence="2">
    <location>
        <begin position="240"/>
        <end position="260"/>
    </location>
</feature>
<feature type="repeat" description="1">
    <location>
        <begin position="61"/>
        <end position="166"/>
    </location>
</feature>
<feature type="repeat" description="2">
    <location>
        <begin position="167"/>
        <end position="274"/>
    </location>
</feature>
<evidence type="ECO:0000250" key="1"/>
<evidence type="ECO:0000255" key="2"/>
<evidence type="ECO:0000305" key="3"/>
<comment type="function">
    <text evidence="1">Seems to be involved in non-photochemical quenching, a process maintains the balance between dissipation and utilization of light energy to minimize generation of oxidizing molecules, thereby protecting the plant against photo-oxidative damage.</text>
</comment>
<comment type="subcellular location">
    <subcellularLocation>
        <location evidence="1">Plastid</location>
        <location evidence="1">Chloroplast thylakoid membrane</location>
        <topology evidence="1">Multi-pass membrane protein</topology>
    </subcellularLocation>
</comment>
<comment type="similarity">
    <text evidence="3">Belongs to the ELIP/psbS family.</text>
</comment>
<reference key="1">
    <citation type="submission" date="1995-01" db="EMBL/GenBank/DDBJ databases">
        <title>Nucleotide sequence of a tobacco psbS gene.</title>
        <authorList>
            <person name="Kim S."/>
            <person name="Pichersky E."/>
        </authorList>
    </citation>
    <scope>NUCLEOTIDE SEQUENCE [MRNA]</scope>
    <source>
        <strain>cv. SR1</strain>
        <tissue>Leaf</tissue>
    </source>
</reference>
<keyword id="KW-0150">Chloroplast</keyword>
<keyword id="KW-0472">Membrane</keyword>
<keyword id="KW-0602">Photosynthesis</keyword>
<keyword id="KW-0604">Photosystem II</keyword>
<keyword id="KW-0934">Plastid</keyword>
<keyword id="KW-1185">Reference proteome</keyword>
<keyword id="KW-0677">Repeat</keyword>
<keyword id="KW-0793">Thylakoid</keyword>
<keyword id="KW-0809">Transit peptide</keyword>
<keyword id="KW-0812">Transmembrane</keyword>
<keyword id="KW-1133">Transmembrane helix</keyword>